<name>RECA_THEAQ</name>
<sequence>MEENKRKSLENALKTIEKEFGKGAVMRLGEMPKLQVDVIPTGSLGLDLALGIGGIPRGRVTEIFGPESGGKTTLALTIIAQAQKGGGVAAFVDAEHALDPLYAKKLGVDVQELLVSQPDTGEQALEIVELLARSGAVDVIVVDSVAALVPKAEIEGEMGDQHVGLQARLMSQALRKLTAVLSKSNTAAIFINQVREKVGVMYGNPETTPGGRALKFYSSVRLDVRKSGQPIKVGNEAVGIKVKVKVVKNKLAPPFREAELEIYFGRGLDPVMDLVNVAVAAGVIEKAGSWFSYGEHRLGQGKEKAAEYLRERPELLEEIRAKVLERADKVVLAAGEEEGE</sequence>
<comment type="function">
    <text>Can catalyze the hydrolysis of ATP in the presence of single-stranded DNA, the ATP-dependent uptake of single-stranded DNA by duplex DNA, and the ATP-dependent hybridization of homologous single-stranded DNAs. It interacts with LexA causing its activation and leading to its autocatalytic cleavage.</text>
</comment>
<comment type="subcellular location">
    <subcellularLocation>
        <location evidence="1">Cytoplasm</location>
    </subcellularLocation>
</comment>
<comment type="similarity">
    <text evidence="1">Belongs to the RecA family.</text>
</comment>
<organism>
    <name type="scientific">Thermus aquaticus</name>
    <dbReference type="NCBI Taxonomy" id="271"/>
    <lineage>
        <taxon>Bacteria</taxon>
        <taxon>Thermotogati</taxon>
        <taxon>Deinococcota</taxon>
        <taxon>Deinococci</taxon>
        <taxon>Thermales</taxon>
        <taxon>Thermaceae</taxon>
        <taxon>Thermus</taxon>
    </lineage>
</organism>
<dbReference type="EMBL" id="L20680">
    <property type="protein sequence ID" value="AAA19796.1"/>
    <property type="molecule type" value="Unassigned_DNA"/>
</dbReference>
<dbReference type="EMBL" id="L20095">
    <property type="protein sequence ID" value="AAA27502.1"/>
    <property type="molecule type" value="Genomic_DNA"/>
</dbReference>
<dbReference type="PIR" id="A53378">
    <property type="entry name" value="A53378"/>
</dbReference>
<dbReference type="SMR" id="P48296"/>
<dbReference type="DIP" id="DIP-61165N"/>
<dbReference type="GO" id="GO:0005829">
    <property type="term" value="C:cytosol"/>
    <property type="evidence" value="ECO:0007669"/>
    <property type="project" value="TreeGrafter"/>
</dbReference>
<dbReference type="GO" id="GO:0005524">
    <property type="term" value="F:ATP binding"/>
    <property type="evidence" value="ECO:0007669"/>
    <property type="project" value="UniProtKB-UniRule"/>
</dbReference>
<dbReference type="GO" id="GO:0016887">
    <property type="term" value="F:ATP hydrolysis activity"/>
    <property type="evidence" value="ECO:0007669"/>
    <property type="project" value="InterPro"/>
</dbReference>
<dbReference type="GO" id="GO:0140664">
    <property type="term" value="F:ATP-dependent DNA damage sensor activity"/>
    <property type="evidence" value="ECO:0007669"/>
    <property type="project" value="InterPro"/>
</dbReference>
<dbReference type="GO" id="GO:0003684">
    <property type="term" value="F:damaged DNA binding"/>
    <property type="evidence" value="ECO:0007669"/>
    <property type="project" value="UniProtKB-UniRule"/>
</dbReference>
<dbReference type="GO" id="GO:0003697">
    <property type="term" value="F:single-stranded DNA binding"/>
    <property type="evidence" value="ECO:0007669"/>
    <property type="project" value="UniProtKB-UniRule"/>
</dbReference>
<dbReference type="GO" id="GO:0006310">
    <property type="term" value="P:DNA recombination"/>
    <property type="evidence" value="ECO:0007669"/>
    <property type="project" value="UniProtKB-UniRule"/>
</dbReference>
<dbReference type="GO" id="GO:0006281">
    <property type="term" value="P:DNA repair"/>
    <property type="evidence" value="ECO:0007669"/>
    <property type="project" value="UniProtKB-UniRule"/>
</dbReference>
<dbReference type="GO" id="GO:0009432">
    <property type="term" value="P:SOS response"/>
    <property type="evidence" value="ECO:0007669"/>
    <property type="project" value="UniProtKB-UniRule"/>
</dbReference>
<dbReference type="CDD" id="cd00983">
    <property type="entry name" value="RecA"/>
    <property type="match status" value="1"/>
</dbReference>
<dbReference type="FunFam" id="3.40.50.300:FF:000087">
    <property type="entry name" value="Recombinase RecA"/>
    <property type="match status" value="1"/>
</dbReference>
<dbReference type="Gene3D" id="3.40.50.300">
    <property type="entry name" value="P-loop containing nucleotide triphosphate hydrolases"/>
    <property type="match status" value="1"/>
</dbReference>
<dbReference type="HAMAP" id="MF_00268">
    <property type="entry name" value="RecA"/>
    <property type="match status" value="1"/>
</dbReference>
<dbReference type="InterPro" id="IPR003593">
    <property type="entry name" value="AAA+_ATPase"/>
</dbReference>
<dbReference type="InterPro" id="IPR013765">
    <property type="entry name" value="DNA_recomb/repair_RecA"/>
</dbReference>
<dbReference type="InterPro" id="IPR020584">
    <property type="entry name" value="DNA_recomb/repair_RecA_CS"/>
</dbReference>
<dbReference type="InterPro" id="IPR027417">
    <property type="entry name" value="P-loop_NTPase"/>
</dbReference>
<dbReference type="InterPro" id="IPR049261">
    <property type="entry name" value="RecA-like_C"/>
</dbReference>
<dbReference type="InterPro" id="IPR049428">
    <property type="entry name" value="RecA-like_N"/>
</dbReference>
<dbReference type="InterPro" id="IPR020588">
    <property type="entry name" value="RecA_ATP-bd"/>
</dbReference>
<dbReference type="InterPro" id="IPR023400">
    <property type="entry name" value="RecA_C_sf"/>
</dbReference>
<dbReference type="InterPro" id="IPR020587">
    <property type="entry name" value="RecA_monomer-monomer_interface"/>
</dbReference>
<dbReference type="NCBIfam" id="TIGR02012">
    <property type="entry name" value="tigrfam_recA"/>
    <property type="match status" value="1"/>
</dbReference>
<dbReference type="PANTHER" id="PTHR45900:SF1">
    <property type="entry name" value="MITOCHONDRIAL DNA REPAIR PROTEIN RECA HOMOLOG-RELATED"/>
    <property type="match status" value="1"/>
</dbReference>
<dbReference type="PANTHER" id="PTHR45900">
    <property type="entry name" value="RECA"/>
    <property type="match status" value="1"/>
</dbReference>
<dbReference type="Pfam" id="PF00154">
    <property type="entry name" value="RecA"/>
    <property type="match status" value="1"/>
</dbReference>
<dbReference type="Pfam" id="PF21096">
    <property type="entry name" value="RecA_C"/>
    <property type="match status" value="1"/>
</dbReference>
<dbReference type="PRINTS" id="PR00142">
    <property type="entry name" value="RECA"/>
</dbReference>
<dbReference type="SMART" id="SM00382">
    <property type="entry name" value="AAA"/>
    <property type="match status" value="1"/>
</dbReference>
<dbReference type="SUPFAM" id="SSF52540">
    <property type="entry name" value="P-loop containing nucleoside triphosphate hydrolases"/>
    <property type="match status" value="1"/>
</dbReference>
<dbReference type="SUPFAM" id="SSF54752">
    <property type="entry name" value="RecA protein, C-terminal domain"/>
    <property type="match status" value="1"/>
</dbReference>
<dbReference type="PROSITE" id="PS00321">
    <property type="entry name" value="RECA_1"/>
    <property type="match status" value="1"/>
</dbReference>
<dbReference type="PROSITE" id="PS50162">
    <property type="entry name" value="RECA_2"/>
    <property type="match status" value="1"/>
</dbReference>
<dbReference type="PROSITE" id="PS50163">
    <property type="entry name" value="RECA_3"/>
    <property type="match status" value="1"/>
</dbReference>
<feature type="chain" id="PRO_0000122879" description="Protein RecA">
    <location>
        <begin position="1"/>
        <end position="340"/>
    </location>
</feature>
<feature type="binding site" evidence="1">
    <location>
        <begin position="65"/>
        <end position="72"/>
    </location>
    <ligand>
        <name>ATP</name>
        <dbReference type="ChEBI" id="CHEBI:30616"/>
    </ligand>
</feature>
<evidence type="ECO:0000255" key="1">
    <source>
        <dbReference type="HAMAP-Rule" id="MF_00268"/>
    </source>
</evidence>
<gene>
    <name evidence="1" type="primary">recA</name>
</gene>
<reference key="1">
    <citation type="journal article" date="1994" name="J. Bacteriol.">
        <title>The recA gene from the thermophile Thermus aquaticus YT-1: cloning, expression, and characterization.</title>
        <authorList>
            <person name="Angov E."/>
            <person name="Camerini-Otero R.D."/>
        </authorList>
    </citation>
    <scope>NUCLEOTIDE SEQUENCE [GENOMIC DNA]</scope>
    <source>
        <strain>ATCC 25104 / DSM 625 / JCM 10724 / NBRC 103206 / NCIMB 11243 / YT-1</strain>
    </source>
</reference>
<reference key="2">
    <citation type="journal article" date="1994" name="J. Biol. Chem.">
        <title>Cloning, sequencing, and expression of RecA proteins from three distantly related thermophilic eubacteria.</title>
        <authorList>
            <person name="Wetmur J.G."/>
            <person name="Wong D.M."/>
            <person name="Ortiz B."/>
            <person name="Tong J."/>
            <person name="Reichert F."/>
            <person name="Gelfand D.H."/>
        </authorList>
    </citation>
    <scope>NUCLEOTIDE SEQUENCE [GENOMIC DNA]</scope>
</reference>
<keyword id="KW-0067">ATP-binding</keyword>
<keyword id="KW-0963">Cytoplasm</keyword>
<keyword id="KW-0227">DNA damage</keyword>
<keyword id="KW-0233">DNA recombination</keyword>
<keyword id="KW-0234">DNA repair</keyword>
<keyword id="KW-0238">DNA-binding</keyword>
<keyword id="KW-0547">Nucleotide-binding</keyword>
<keyword id="KW-0742">SOS response</keyword>
<proteinExistence type="inferred from homology"/>
<accession>P48296</accession>
<protein>
    <recommendedName>
        <fullName evidence="1">Protein RecA</fullName>
    </recommendedName>
    <alternativeName>
        <fullName evidence="1">Recombinase A</fullName>
    </alternativeName>
</protein>